<protein>
    <recommendedName>
        <fullName evidence="1">Small ribosomal subunit protein bS21</fullName>
    </recommendedName>
    <alternativeName>
        <fullName evidence="3">30S ribosomal protein S21</fullName>
    </alternativeName>
</protein>
<sequence>MPAVKVKENEPFDVALRRFKRSCEKAGVLAEVRSREFYEKPTSERKRKAAAAVKRHAKKVQREQRRAVRLY</sequence>
<gene>
    <name evidence="1" type="primary">rpsU</name>
    <name type="ordered locus">Psyr_4639</name>
</gene>
<keyword id="KW-0687">Ribonucleoprotein</keyword>
<keyword id="KW-0689">Ribosomal protein</keyword>
<feature type="chain" id="PRO_0000266738" description="Small ribosomal subunit protein bS21">
    <location>
        <begin position="1"/>
        <end position="71"/>
    </location>
</feature>
<feature type="region of interest" description="Disordered" evidence="2">
    <location>
        <begin position="50"/>
        <end position="71"/>
    </location>
</feature>
<feature type="compositionally biased region" description="Basic residues" evidence="2">
    <location>
        <begin position="50"/>
        <end position="59"/>
    </location>
</feature>
<feature type="compositionally biased region" description="Basic and acidic residues" evidence="2">
    <location>
        <begin position="60"/>
        <end position="71"/>
    </location>
</feature>
<accession>Q4ZMF3</accession>
<reference key="1">
    <citation type="journal article" date="2005" name="Proc. Natl. Acad. Sci. U.S.A.">
        <title>Comparison of the complete genome sequences of Pseudomonas syringae pv. syringae B728a and pv. tomato DC3000.</title>
        <authorList>
            <person name="Feil H."/>
            <person name="Feil W.S."/>
            <person name="Chain P."/>
            <person name="Larimer F."/>
            <person name="Dibartolo G."/>
            <person name="Copeland A."/>
            <person name="Lykidis A."/>
            <person name="Trong S."/>
            <person name="Nolan M."/>
            <person name="Goltsman E."/>
            <person name="Thiel J."/>
            <person name="Malfatti S."/>
            <person name="Loper J.E."/>
            <person name="Lapidus A."/>
            <person name="Detter J.C."/>
            <person name="Land M."/>
            <person name="Richardson P.M."/>
            <person name="Kyrpides N.C."/>
            <person name="Ivanova N."/>
            <person name="Lindow S.E."/>
        </authorList>
    </citation>
    <scope>NUCLEOTIDE SEQUENCE [LARGE SCALE GENOMIC DNA]</scope>
    <source>
        <strain>B728a</strain>
    </source>
</reference>
<comment type="similarity">
    <text evidence="1">Belongs to the bacterial ribosomal protein bS21 family.</text>
</comment>
<evidence type="ECO:0000255" key="1">
    <source>
        <dbReference type="HAMAP-Rule" id="MF_00358"/>
    </source>
</evidence>
<evidence type="ECO:0000256" key="2">
    <source>
        <dbReference type="SAM" id="MobiDB-lite"/>
    </source>
</evidence>
<evidence type="ECO:0000305" key="3"/>
<proteinExistence type="inferred from homology"/>
<dbReference type="EMBL" id="CP000075">
    <property type="protein sequence ID" value="AAY39669.1"/>
    <property type="molecule type" value="Genomic_DNA"/>
</dbReference>
<dbReference type="RefSeq" id="WP_002551877.1">
    <property type="nucleotide sequence ID" value="NC_007005.1"/>
</dbReference>
<dbReference type="RefSeq" id="YP_237707.1">
    <property type="nucleotide sequence ID" value="NC_007005.1"/>
</dbReference>
<dbReference type="SMR" id="Q4ZMF3"/>
<dbReference type="STRING" id="205918.Psyr_4639"/>
<dbReference type="GeneID" id="98285513"/>
<dbReference type="KEGG" id="psb:Psyr_4639"/>
<dbReference type="PATRIC" id="fig|205918.7.peg.4784"/>
<dbReference type="eggNOG" id="COG0828">
    <property type="taxonomic scope" value="Bacteria"/>
</dbReference>
<dbReference type="HOGENOM" id="CLU_159258_1_0_6"/>
<dbReference type="OrthoDB" id="9799244at2"/>
<dbReference type="PRO" id="PR:Q4ZMF3"/>
<dbReference type="Proteomes" id="UP000000426">
    <property type="component" value="Chromosome"/>
</dbReference>
<dbReference type="GO" id="GO:1990904">
    <property type="term" value="C:ribonucleoprotein complex"/>
    <property type="evidence" value="ECO:0007669"/>
    <property type="project" value="UniProtKB-KW"/>
</dbReference>
<dbReference type="GO" id="GO:0005840">
    <property type="term" value="C:ribosome"/>
    <property type="evidence" value="ECO:0007669"/>
    <property type="project" value="UniProtKB-KW"/>
</dbReference>
<dbReference type="GO" id="GO:0003735">
    <property type="term" value="F:structural constituent of ribosome"/>
    <property type="evidence" value="ECO:0007669"/>
    <property type="project" value="InterPro"/>
</dbReference>
<dbReference type="GO" id="GO:0006412">
    <property type="term" value="P:translation"/>
    <property type="evidence" value="ECO:0007669"/>
    <property type="project" value="UniProtKB-UniRule"/>
</dbReference>
<dbReference type="Gene3D" id="1.20.5.1150">
    <property type="entry name" value="Ribosomal protein S8"/>
    <property type="match status" value="1"/>
</dbReference>
<dbReference type="HAMAP" id="MF_00358">
    <property type="entry name" value="Ribosomal_bS21"/>
    <property type="match status" value="1"/>
</dbReference>
<dbReference type="InterPro" id="IPR001911">
    <property type="entry name" value="Ribosomal_bS21"/>
</dbReference>
<dbReference type="InterPro" id="IPR018278">
    <property type="entry name" value="Ribosomal_bS21_CS"/>
</dbReference>
<dbReference type="InterPro" id="IPR038380">
    <property type="entry name" value="Ribosomal_bS21_sf"/>
</dbReference>
<dbReference type="NCBIfam" id="TIGR00030">
    <property type="entry name" value="S21p"/>
    <property type="match status" value="1"/>
</dbReference>
<dbReference type="PANTHER" id="PTHR21109">
    <property type="entry name" value="MITOCHONDRIAL 28S RIBOSOMAL PROTEIN S21"/>
    <property type="match status" value="1"/>
</dbReference>
<dbReference type="PANTHER" id="PTHR21109:SF22">
    <property type="entry name" value="SMALL RIBOSOMAL SUBUNIT PROTEIN BS21"/>
    <property type="match status" value="1"/>
</dbReference>
<dbReference type="Pfam" id="PF01165">
    <property type="entry name" value="Ribosomal_S21"/>
    <property type="match status" value="1"/>
</dbReference>
<dbReference type="PRINTS" id="PR00976">
    <property type="entry name" value="RIBOSOMALS21"/>
</dbReference>
<dbReference type="PROSITE" id="PS01181">
    <property type="entry name" value="RIBOSOMAL_S21"/>
    <property type="match status" value="1"/>
</dbReference>
<organism>
    <name type="scientific">Pseudomonas syringae pv. syringae (strain B728a)</name>
    <dbReference type="NCBI Taxonomy" id="205918"/>
    <lineage>
        <taxon>Bacteria</taxon>
        <taxon>Pseudomonadati</taxon>
        <taxon>Pseudomonadota</taxon>
        <taxon>Gammaproteobacteria</taxon>
        <taxon>Pseudomonadales</taxon>
        <taxon>Pseudomonadaceae</taxon>
        <taxon>Pseudomonas</taxon>
        <taxon>Pseudomonas syringae</taxon>
    </lineage>
</organism>
<name>RS21_PSEU2</name>